<accession>B1YTR7</accession>
<organism>
    <name type="scientific">Burkholderia ambifaria (strain MC40-6)</name>
    <dbReference type="NCBI Taxonomy" id="398577"/>
    <lineage>
        <taxon>Bacteria</taxon>
        <taxon>Pseudomonadati</taxon>
        <taxon>Pseudomonadota</taxon>
        <taxon>Betaproteobacteria</taxon>
        <taxon>Burkholderiales</taxon>
        <taxon>Burkholderiaceae</taxon>
        <taxon>Burkholderia</taxon>
        <taxon>Burkholderia cepacia complex</taxon>
    </lineage>
</organism>
<protein>
    <recommendedName>
        <fullName evidence="1">2-isopropylmalate synthase</fullName>
        <ecNumber evidence="1">2.3.3.13</ecNumber>
    </recommendedName>
    <alternativeName>
        <fullName evidence="1">Alpha-IPM synthase</fullName>
    </alternativeName>
    <alternativeName>
        <fullName evidence="1">Alpha-isopropylmalate synthase</fullName>
    </alternativeName>
</protein>
<comment type="function">
    <text evidence="1">Catalyzes the condensation of the acetyl group of acetyl-CoA with 3-methyl-2-oxobutanoate (2-ketoisovalerate) to form 3-carboxy-3-hydroxy-4-methylpentanoate (2-isopropylmalate).</text>
</comment>
<comment type="catalytic activity">
    <reaction evidence="1">
        <text>3-methyl-2-oxobutanoate + acetyl-CoA + H2O = (2S)-2-isopropylmalate + CoA + H(+)</text>
        <dbReference type="Rhea" id="RHEA:21524"/>
        <dbReference type="ChEBI" id="CHEBI:1178"/>
        <dbReference type="ChEBI" id="CHEBI:11851"/>
        <dbReference type="ChEBI" id="CHEBI:15377"/>
        <dbReference type="ChEBI" id="CHEBI:15378"/>
        <dbReference type="ChEBI" id="CHEBI:57287"/>
        <dbReference type="ChEBI" id="CHEBI:57288"/>
        <dbReference type="EC" id="2.3.3.13"/>
    </reaction>
</comment>
<comment type="cofactor">
    <cofactor evidence="1">
        <name>Mn(2+)</name>
        <dbReference type="ChEBI" id="CHEBI:29035"/>
    </cofactor>
</comment>
<comment type="pathway">
    <text evidence="1">Amino-acid biosynthesis; L-leucine biosynthesis; L-leucine from 3-methyl-2-oxobutanoate: step 1/4.</text>
</comment>
<comment type="subunit">
    <text evidence="1">Homodimer.</text>
</comment>
<comment type="subcellular location">
    <subcellularLocation>
        <location evidence="1">Cytoplasm</location>
    </subcellularLocation>
</comment>
<comment type="similarity">
    <text evidence="1">Belongs to the alpha-IPM synthase/homocitrate synthase family. LeuA type 1 subfamily.</text>
</comment>
<reference key="1">
    <citation type="submission" date="2008-04" db="EMBL/GenBank/DDBJ databases">
        <title>Complete sequence of chromosome 1 of Burkholderia ambifaria MC40-6.</title>
        <authorList>
            <person name="Copeland A."/>
            <person name="Lucas S."/>
            <person name="Lapidus A."/>
            <person name="Glavina del Rio T."/>
            <person name="Dalin E."/>
            <person name="Tice H."/>
            <person name="Pitluck S."/>
            <person name="Chain P."/>
            <person name="Malfatti S."/>
            <person name="Shin M."/>
            <person name="Vergez L."/>
            <person name="Lang D."/>
            <person name="Schmutz J."/>
            <person name="Larimer F."/>
            <person name="Land M."/>
            <person name="Hauser L."/>
            <person name="Kyrpides N."/>
            <person name="Lykidis A."/>
            <person name="Ramette A."/>
            <person name="Konstantinidis K."/>
            <person name="Tiedje J."/>
            <person name="Richardson P."/>
        </authorList>
    </citation>
    <scope>NUCLEOTIDE SEQUENCE [LARGE SCALE GENOMIC DNA]</scope>
    <source>
        <strain>MC40-6</strain>
    </source>
</reference>
<name>LEU1_BURA4</name>
<keyword id="KW-0028">Amino-acid biosynthesis</keyword>
<keyword id="KW-0100">Branched-chain amino acid biosynthesis</keyword>
<keyword id="KW-0963">Cytoplasm</keyword>
<keyword id="KW-0432">Leucine biosynthesis</keyword>
<keyword id="KW-0464">Manganese</keyword>
<keyword id="KW-0479">Metal-binding</keyword>
<keyword id="KW-0808">Transferase</keyword>
<proteinExistence type="inferred from homology"/>
<gene>
    <name evidence="1" type="primary">leuA</name>
    <name type="ordered locus">BamMC406_2176</name>
</gene>
<evidence type="ECO:0000255" key="1">
    <source>
        <dbReference type="HAMAP-Rule" id="MF_01025"/>
    </source>
</evidence>
<feature type="chain" id="PRO_1000149144" description="2-isopropylmalate synthase">
    <location>
        <begin position="1"/>
        <end position="514"/>
    </location>
</feature>
<feature type="domain" description="Pyruvate carboxyltransferase" evidence="1">
    <location>
        <begin position="5"/>
        <end position="268"/>
    </location>
</feature>
<feature type="region of interest" description="Regulatory domain" evidence="1">
    <location>
        <begin position="395"/>
        <end position="514"/>
    </location>
</feature>
<feature type="binding site" evidence="1">
    <location>
        <position position="14"/>
    </location>
    <ligand>
        <name>Mn(2+)</name>
        <dbReference type="ChEBI" id="CHEBI:29035"/>
    </ligand>
</feature>
<feature type="binding site" evidence="1">
    <location>
        <position position="202"/>
    </location>
    <ligand>
        <name>Mn(2+)</name>
        <dbReference type="ChEBI" id="CHEBI:29035"/>
    </ligand>
</feature>
<feature type="binding site" evidence="1">
    <location>
        <position position="204"/>
    </location>
    <ligand>
        <name>Mn(2+)</name>
        <dbReference type="ChEBI" id="CHEBI:29035"/>
    </ligand>
</feature>
<feature type="binding site" evidence="1">
    <location>
        <position position="239"/>
    </location>
    <ligand>
        <name>Mn(2+)</name>
        <dbReference type="ChEBI" id="CHEBI:29035"/>
    </ligand>
</feature>
<dbReference type="EC" id="2.3.3.13" evidence="1"/>
<dbReference type="EMBL" id="CP001025">
    <property type="protein sequence ID" value="ACB64655.1"/>
    <property type="molecule type" value="Genomic_DNA"/>
</dbReference>
<dbReference type="RefSeq" id="WP_012364325.1">
    <property type="nucleotide sequence ID" value="NC_010551.1"/>
</dbReference>
<dbReference type="SMR" id="B1YTR7"/>
<dbReference type="KEGG" id="bac:BamMC406_2176"/>
<dbReference type="HOGENOM" id="CLU_022158_0_1_4"/>
<dbReference type="OrthoDB" id="9803573at2"/>
<dbReference type="UniPathway" id="UPA00048">
    <property type="reaction ID" value="UER00070"/>
</dbReference>
<dbReference type="Proteomes" id="UP000001680">
    <property type="component" value="Chromosome 1"/>
</dbReference>
<dbReference type="GO" id="GO:0005829">
    <property type="term" value="C:cytosol"/>
    <property type="evidence" value="ECO:0007669"/>
    <property type="project" value="TreeGrafter"/>
</dbReference>
<dbReference type="GO" id="GO:0003852">
    <property type="term" value="F:2-isopropylmalate synthase activity"/>
    <property type="evidence" value="ECO:0007669"/>
    <property type="project" value="UniProtKB-UniRule"/>
</dbReference>
<dbReference type="GO" id="GO:0003985">
    <property type="term" value="F:acetyl-CoA C-acetyltransferase activity"/>
    <property type="evidence" value="ECO:0007669"/>
    <property type="project" value="UniProtKB-UniRule"/>
</dbReference>
<dbReference type="GO" id="GO:0030145">
    <property type="term" value="F:manganese ion binding"/>
    <property type="evidence" value="ECO:0007669"/>
    <property type="project" value="UniProtKB-UniRule"/>
</dbReference>
<dbReference type="GO" id="GO:0009098">
    <property type="term" value="P:L-leucine biosynthetic process"/>
    <property type="evidence" value="ECO:0007669"/>
    <property type="project" value="UniProtKB-UniRule"/>
</dbReference>
<dbReference type="CDD" id="cd07940">
    <property type="entry name" value="DRE_TIM_IPMS"/>
    <property type="match status" value="1"/>
</dbReference>
<dbReference type="FunFam" id="1.10.238.260:FF:000001">
    <property type="entry name" value="2-isopropylmalate synthase"/>
    <property type="match status" value="1"/>
</dbReference>
<dbReference type="FunFam" id="3.20.20.70:FF:000010">
    <property type="entry name" value="2-isopropylmalate synthase"/>
    <property type="match status" value="1"/>
</dbReference>
<dbReference type="FunFam" id="3.30.160.270:FF:000003">
    <property type="entry name" value="2-isopropylmalate synthase"/>
    <property type="match status" value="1"/>
</dbReference>
<dbReference type="Gene3D" id="1.10.238.260">
    <property type="match status" value="1"/>
</dbReference>
<dbReference type="Gene3D" id="3.30.160.270">
    <property type="match status" value="1"/>
</dbReference>
<dbReference type="Gene3D" id="3.20.20.70">
    <property type="entry name" value="Aldolase class I"/>
    <property type="match status" value="1"/>
</dbReference>
<dbReference type="HAMAP" id="MF_01025">
    <property type="entry name" value="LeuA_type1"/>
    <property type="match status" value="1"/>
</dbReference>
<dbReference type="InterPro" id="IPR050073">
    <property type="entry name" value="2-IPM_HCS-like"/>
</dbReference>
<dbReference type="InterPro" id="IPR013709">
    <property type="entry name" value="2-isopropylmalate_synth_dimer"/>
</dbReference>
<dbReference type="InterPro" id="IPR002034">
    <property type="entry name" value="AIPM/Hcit_synth_CS"/>
</dbReference>
<dbReference type="InterPro" id="IPR013785">
    <property type="entry name" value="Aldolase_TIM"/>
</dbReference>
<dbReference type="InterPro" id="IPR054691">
    <property type="entry name" value="LeuA/HCS_post-cat"/>
</dbReference>
<dbReference type="InterPro" id="IPR036230">
    <property type="entry name" value="LeuA_allosteric_dom_sf"/>
</dbReference>
<dbReference type="InterPro" id="IPR005671">
    <property type="entry name" value="LeuA_bact_synth"/>
</dbReference>
<dbReference type="InterPro" id="IPR000891">
    <property type="entry name" value="PYR_CT"/>
</dbReference>
<dbReference type="NCBIfam" id="TIGR00973">
    <property type="entry name" value="leuA_bact"/>
    <property type="match status" value="1"/>
</dbReference>
<dbReference type="NCBIfam" id="NF002086">
    <property type="entry name" value="PRK00915.1-3"/>
    <property type="match status" value="1"/>
</dbReference>
<dbReference type="NCBIfam" id="NF002087">
    <property type="entry name" value="PRK00915.1-4"/>
    <property type="match status" value="1"/>
</dbReference>
<dbReference type="PANTHER" id="PTHR10277:SF9">
    <property type="entry name" value="2-ISOPROPYLMALATE SYNTHASE 1, CHLOROPLASTIC-RELATED"/>
    <property type="match status" value="1"/>
</dbReference>
<dbReference type="PANTHER" id="PTHR10277">
    <property type="entry name" value="HOMOCITRATE SYNTHASE-RELATED"/>
    <property type="match status" value="1"/>
</dbReference>
<dbReference type="Pfam" id="PF22617">
    <property type="entry name" value="HCS_D2"/>
    <property type="match status" value="1"/>
</dbReference>
<dbReference type="Pfam" id="PF00682">
    <property type="entry name" value="HMGL-like"/>
    <property type="match status" value="1"/>
</dbReference>
<dbReference type="Pfam" id="PF08502">
    <property type="entry name" value="LeuA_dimer"/>
    <property type="match status" value="1"/>
</dbReference>
<dbReference type="SMART" id="SM00917">
    <property type="entry name" value="LeuA_dimer"/>
    <property type="match status" value="1"/>
</dbReference>
<dbReference type="SUPFAM" id="SSF110921">
    <property type="entry name" value="2-isopropylmalate synthase LeuA, allosteric (dimerisation) domain"/>
    <property type="match status" value="1"/>
</dbReference>
<dbReference type="SUPFAM" id="SSF51569">
    <property type="entry name" value="Aldolase"/>
    <property type="match status" value="1"/>
</dbReference>
<dbReference type="PROSITE" id="PS00815">
    <property type="entry name" value="AIPM_HOMOCIT_SYNTH_1"/>
    <property type="match status" value="1"/>
</dbReference>
<dbReference type="PROSITE" id="PS00816">
    <property type="entry name" value="AIPM_HOMOCIT_SYNTH_2"/>
    <property type="match status" value="1"/>
</dbReference>
<dbReference type="PROSITE" id="PS50991">
    <property type="entry name" value="PYR_CT"/>
    <property type="match status" value="1"/>
</dbReference>
<sequence>MTDKLIIFDTTLRDGEQSPGASMTKEEKIRIAKHLERMKVDVIEAGFAASSNGDFDAIHTIAGLVKDSTICSLARANDKDIQRAADALKPANSARIHTFIATSPLHMEKKLRMTPDQVFEQARLAVRFARKFTDNVEFSPEDGSRSDLDFLCRVLEAVIAEGATTINIADTVGYGVPELYGNLVKTLRERIPNSDKAIFSVHCHNDLGMAVANSLAGVKIGGARQVECTINGLGERAGNTSLEEIVMAVKTRKDYFGLDVGLDTTQIVPTSKLVSQITGFVVQPNKAVVGANAFAHASGIHQDGVLKARDTYEIMRAEDVGWTANKIVLGKLSGRNAFKQRLQELGVSLDSETELNAAFMRFKDLADRKSEIFDEDIIAIVSEESALAQEQEHYKFVSLSQRSETGEQPQAKVVFALDGKEVTGEARGNGPVDATFNAIEGEVGSGSELLLYSVNAITTGTQAQGEVTVRLSKSGRIVNGVGTDPDIVAASAKAYIAALNKLHSKDDKLNPQRS</sequence>